<comment type="subcellular location">
    <subcellularLocation>
        <location evidence="1">Cytoplasm</location>
    </subcellularLocation>
</comment>
<comment type="similarity">
    <text evidence="1">Belongs to the TACO1 family.</text>
</comment>
<feature type="chain" id="PRO_1000045371" description="Probable transcriptional regulatory protein SACE_2018">
    <location>
        <begin position="1"/>
        <end position="250"/>
    </location>
</feature>
<gene>
    <name type="ordered locus">SACE_2018</name>
</gene>
<organism>
    <name type="scientific">Saccharopolyspora erythraea (strain ATCC 11635 / DSM 40517 / JCM 4748 / NBRC 13426 / NCIMB 8594 / NRRL 2338)</name>
    <dbReference type="NCBI Taxonomy" id="405948"/>
    <lineage>
        <taxon>Bacteria</taxon>
        <taxon>Bacillati</taxon>
        <taxon>Actinomycetota</taxon>
        <taxon>Actinomycetes</taxon>
        <taxon>Pseudonocardiales</taxon>
        <taxon>Pseudonocardiaceae</taxon>
        <taxon>Saccharopolyspora</taxon>
    </lineage>
</organism>
<accession>A4FBA3</accession>
<proteinExistence type="inferred from homology"/>
<name>Y2018_SACEN</name>
<keyword id="KW-0963">Cytoplasm</keyword>
<keyword id="KW-0238">DNA-binding</keyword>
<keyword id="KW-1185">Reference proteome</keyword>
<keyword id="KW-0804">Transcription</keyword>
<keyword id="KW-0805">Transcription regulation</keyword>
<reference key="1">
    <citation type="journal article" date="2007" name="Nat. Biotechnol.">
        <title>Complete genome sequence of the erythromycin-producing bacterium Saccharopolyspora erythraea NRRL23338.</title>
        <authorList>
            <person name="Oliynyk M."/>
            <person name="Samborskyy M."/>
            <person name="Lester J.B."/>
            <person name="Mironenko T."/>
            <person name="Scott N."/>
            <person name="Dickens S."/>
            <person name="Haydock S.F."/>
            <person name="Leadlay P.F."/>
        </authorList>
    </citation>
    <scope>NUCLEOTIDE SEQUENCE [LARGE SCALE GENOMIC DNA]</scope>
    <source>
        <strain>ATCC 11635 / DSM 40517 / JCM 4748 / NBRC 13426 / NCIMB 8594 / NRRL 2338</strain>
    </source>
</reference>
<dbReference type="EMBL" id="AM420293">
    <property type="protein sequence ID" value="CAM01328.1"/>
    <property type="molecule type" value="Genomic_DNA"/>
</dbReference>
<dbReference type="RefSeq" id="WP_009948976.1">
    <property type="nucleotide sequence ID" value="NC_009142.1"/>
</dbReference>
<dbReference type="SMR" id="A4FBA3"/>
<dbReference type="STRING" id="405948.SACE_2018"/>
<dbReference type="KEGG" id="sen:SACE_2018"/>
<dbReference type="eggNOG" id="COG0217">
    <property type="taxonomic scope" value="Bacteria"/>
</dbReference>
<dbReference type="HOGENOM" id="CLU_062974_2_2_11"/>
<dbReference type="OrthoDB" id="9781053at2"/>
<dbReference type="Proteomes" id="UP000006728">
    <property type="component" value="Chromosome"/>
</dbReference>
<dbReference type="GO" id="GO:0005829">
    <property type="term" value="C:cytosol"/>
    <property type="evidence" value="ECO:0007669"/>
    <property type="project" value="TreeGrafter"/>
</dbReference>
<dbReference type="GO" id="GO:0003677">
    <property type="term" value="F:DNA binding"/>
    <property type="evidence" value="ECO:0007669"/>
    <property type="project" value="UniProtKB-UniRule"/>
</dbReference>
<dbReference type="GO" id="GO:0006355">
    <property type="term" value="P:regulation of DNA-templated transcription"/>
    <property type="evidence" value="ECO:0007669"/>
    <property type="project" value="UniProtKB-UniRule"/>
</dbReference>
<dbReference type="FunFam" id="1.10.10.200:FF:000002">
    <property type="entry name" value="Probable transcriptional regulatory protein CLM62_37755"/>
    <property type="match status" value="1"/>
</dbReference>
<dbReference type="Gene3D" id="1.10.10.200">
    <property type="match status" value="1"/>
</dbReference>
<dbReference type="Gene3D" id="3.30.70.980">
    <property type="match status" value="2"/>
</dbReference>
<dbReference type="HAMAP" id="MF_00693">
    <property type="entry name" value="Transcrip_reg_TACO1"/>
    <property type="match status" value="1"/>
</dbReference>
<dbReference type="InterPro" id="IPR017856">
    <property type="entry name" value="Integrase-like_N"/>
</dbReference>
<dbReference type="InterPro" id="IPR048300">
    <property type="entry name" value="TACO1_YebC-like_2nd/3rd_dom"/>
</dbReference>
<dbReference type="InterPro" id="IPR049083">
    <property type="entry name" value="TACO1_YebC_N"/>
</dbReference>
<dbReference type="InterPro" id="IPR002876">
    <property type="entry name" value="Transcrip_reg_TACO1-like"/>
</dbReference>
<dbReference type="InterPro" id="IPR026564">
    <property type="entry name" value="Transcrip_reg_TACO1-like_dom3"/>
</dbReference>
<dbReference type="InterPro" id="IPR029072">
    <property type="entry name" value="YebC-like"/>
</dbReference>
<dbReference type="NCBIfam" id="NF001030">
    <property type="entry name" value="PRK00110.1"/>
    <property type="match status" value="1"/>
</dbReference>
<dbReference type="NCBIfam" id="NF009044">
    <property type="entry name" value="PRK12378.1"/>
    <property type="match status" value="1"/>
</dbReference>
<dbReference type="NCBIfam" id="TIGR01033">
    <property type="entry name" value="YebC/PmpR family DNA-binding transcriptional regulator"/>
    <property type="match status" value="1"/>
</dbReference>
<dbReference type="PANTHER" id="PTHR12532:SF6">
    <property type="entry name" value="TRANSCRIPTIONAL REGULATORY PROTEIN YEBC-RELATED"/>
    <property type="match status" value="1"/>
</dbReference>
<dbReference type="PANTHER" id="PTHR12532">
    <property type="entry name" value="TRANSLATIONAL ACTIVATOR OF CYTOCHROME C OXIDASE 1"/>
    <property type="match status" value="1"/>
</dbReference>
<dbReference type="Pfam" id="PF20772">
    <property type="entry name" value="TACO1_YebC_N"/>
    <property type="match status" value="1"/>
</dbReference>
<dbReference type="Pfam" id="PF01709">
    <property type="entry name" value="Transcrip_reg"/>
    <property type="match status" value="1"/>
</dbReference>
<dbReference type="SUPFAM" id="SSF75625">
    <property type="entry name" value="YebC-like"/>
    <property type="match status" value="1"/>
</dbReference>
<evidence type="ECO:0000255" key="1">
    <source>
        <dbReference type="HAMAP-Rule" id="MF_00693"/>
    </source>
</evidence>
<sequence>MSGHSKWATTKHKKAALDAKRGKLFAKLIKNVEVAARTGGGDPDGNPTLYDAIQKARKNSVPQDNIERARKRGAGEEAGGADWQTIMYEGYGPNGVAVLVECLTDNRNRAAGEVRTAMTRNGGSMADAGSVAYLFNRKGVVLLPKNGLSEDDVLSAVLEAGAEEINDLGESYEILTEPSDLVDVRKALQAEGIEYDSAETNFLASVNVPLDADGARKLFKLIDVLEDCDDVQNVFANFDVSDEVLEEVNA</sequence>
<protein>
    <recommendedName>
        <fullName evidence="1">Probable transcriptional regulatory protein SACE_2018</fullName>
    </recommendedName>
</protein>